<evidence type="ECO:0000255" key="1">
    <source>
        <dbReference type="PROSITE-ProRule" id="PRU01141"/>
    </source>
</evidence>
<evidence type="ECO:0000256" key="2">
    <source>
        <dbReference type="SAM" id="MobiDB-lite"/>
    </source>
</evidence>
<evidence type="ECO:0000305" key="3"/>
<protein>
    <recommendedName>
        <fullName>Protein D7</fullName>
    </recommendedName>
</protein>
<gene>
    <name type="primary">d7</name>
</gene>
<dbReference type="EMBL" id="X13856">
    <property type="protein sequence ID" value="CAA32068.1"/>
    <property type="molecule type" value="mRNA"/>
</dbReference>
<dbReference type="EMBL" id="BC090198">
    <property type="protein sequence ID" value="AAH90198.1"/>
    <property type="molecule type" value="mRNA"/>
</dbReference>
<dbReference type="PIR" id="S06173">
    <property type="entry name" value="S06173"/>
</dbReference>
<dbReference type="RefSeq" id="NP_001081517.1">
    <property type="nucleotide sequence ID" value="NM_001088048.1"/>
</dbReference>
<dbReference type="SMR" id="P13007"/>
<dbReference type="DNASU" id="397887"/>
<dbReference type="GeneID" id="397887"/>
<dbReference type="KEGG" id="xla:397887"/>
<dbReference type="AGR" id="Xenbase:XB-GENE-6489103"/>
<dbReference type="CTD" id="397887"/>
<dbReference type="Xenbase" id="XB-GENE-6489103">
    <property type="gene designation" value="gtsf2.L"/>
</dbReference>
<dbReference type="OrthoDB" id="10069248at2759"/>
<dbReference type="Proteomes" id="UP000186698">
    <property type="component" value="Chromosome 2L"/>
</dbReference>
<dbReference type="Bgee" id="397887">
    <property type="expression patterns" value="Expressed in egg cell and 18 other cell types or tissues"/>
</dbReference>
<dbReference type="GO" id="GO:0005737">
    <property type="term" value="C:cytoplasm"/>
    <property type="evidence" value="ECO:0007669"/>
    <property type="project" value="UniProtKB-SubCell"/>
</dbReference>
<dbReference type="GO" id="GO:0008270">
    <property type="term" value="F:zinc ion binding"/>
    <property type="evidence" value="ECO:0007669"/>
    <property type="project" value="UniProtKB-KW"/>
</dbReference>
<dbReference type="InterPro" id="IPR022776">
    <property type="entry name" value="TRM13/UPF0224_CHHC_Znf_dom"/>
</dbReference>
<dbReference type="InterPro" id="IPR051591">
    <property type="entry name" value="UPF0224_FAM112_RNA_Proc"/>
</dbReference>
<dbReference type="InterPro" id="IPR036236">
    <property type="entry name" value="Znf_C2H2_sf"/>
</dbReference>
<dbReference type="PANTHER" id="PTHR21402:SF5">
    <property type="entry name" value="GAMETOCYTE SPECIFIC FACTOR 1"/>
    <property type="match status" value="1"/>
</dbReference>
<dbReference type="PANTHER" id="PTHR21402">
    <property type="entry name" value="GAMETOCYTE SPECIFIC FACTOR 1-RELATED"/>
    <property type="match status" value="1"/>
</dbReference>
<dbReference type="Pfam" id="PF05253">
    <property type="entry name" value="zf-U11-48K"/>
    <property type="match status" value="2"/>
</dbReference>
<dbReference type="SUPFAM" id="SSF57667">
    <property type="entry name" value="beta-beta-alpha zinc fingers"/>
    <property type="match status" value="2"/>
</dbReference>
<dbReference type="PROSITE" id="PS51800">
    <property type="entry name" value="ZF_CHHC_U11_48K"/>
    <property type="match status" value="2"/>
</dbReference>
<reference key="1">
    <citation type="journal article" date="1988" name="Genes Dev.">
        <title>Destruction of a translationally controlled mRNA in Xenopus oocytes delays progesterone-induced maturation.</title>
        <authorList>
            <person name="Smith R.C."/>
            <person name="Dworkin M.B."/>
            <person name="Dworkin-Rastl E."/>
        </authorList>
    </citation>
    <scope>NUCLEOTIDE SEQUENCE [MRNA]</scope>
    <source>
        <tissue>Oocyte</tissue>
    </source>
</reference>
<reference key="2">
    <citation type="submission" date="2005-02" db="EMBL/GenBank/DDBJ databases">
        <authorList>
            <consortium name="NIH - Xenopus Gene Collection (XGC) project"/>
        </authorList>
    </citation>
    <scope>NUCLEOTIDE SEQUENCE [LARGE SCALE MRNA]</scope>
    <source>
        <tissue>Egg</tissue>
    </source>
</reference>
<accession>P13007</accession>
<accession>Q5EAY6</accession>
<feature type="chain" id="PRO_0000221623" description="Protein D7">
    <location>
        <begin position="1"/>
        <end position="278"/>
    </location>
</feature>
<feature type="zinc finger region" description="CHHC U11-48K-type 1" evidence="1">
    <location>
        <begin position="6"/>
        <end position="33"/>
    </location>
</feature>
<feature type="zinc finger region" description="CHHC U11-48K-type 2" evidence="1">
    <location>
        <begin position="40"/>
        <end position="67"/>
    </location>
</feature>
<feature type="region of interest" description="Disordered" evidence="2">
    <location>
        <begin position="149"/>
        <end position="230"/>
    </location>
</feature>
<feature type="region of interest" description="Disordered" evidence="2">
    <location>
        <begin position="249"/>
        <end position="278"/>
    </location>
</feature>
<feature type="compositionally biased region" description="Polar residues" evidence="2">
    <location>
        <begin position="149"/>
        <end position="164"/>
    </location>
</feature>
<feature type="compositionally biased region" description="Basic and acidic residues" evidence="2">
    <location>
        <begin position="165"/>
        <end position="175"/>
    </location>
</feature>
<feature type="compositionally biased region" description="Polar residues" evidence="2">
    <location>
        <begin position="188"/>
        <end position="200"/>
    </location>
</feature>
<feature type="compositionally biased region" description="Basic and acidic residues" evidence="2">
    <location>
        <begin position="214"/>
        <end position="225"/>
    </location>
</feature>
<feature type="binding site" evidence="1">
    <location>
        <position position="9"/>
    </location>
    <ligand>
        <name>Zn(2+)</name>
        <dbReference type="ChEBI" id="CHEBI:29105"/>
        <label>1</label>
    </ligand>
</feature>
<feature type="binding site" evidence="1">
    <location>
        <position position="15"/>
    </location>
    <ligand>
        <name>Zn(2+)</name>
        <dbReference type="ChEBI" id="CHEBI:29105"/>
        <label>1</label>
    </ligand>
</feature>
<feature type="binding site" evidence="1">
    <location>
        <position position="25"/>
    </location>
    <ligand>
        <name>Zn(2+)</name>
        <dbReference type="ChEBI" id="CHEBI:29105"/>
        <label>1</label>
    </ligand>
</feature>
<feature type="binding site" evidence="1">
    <location>
        <position position="29"/>
    </location>
    <ligand>
        <name>Zn(2+)</name>
        <dbReference type="ChEBI" id="CHEBI:29105"/>
        <label>1</label>
    </ligand>
</feature>
<feature type="binding site" evidence="1">
    <location>
        <position position="43"/>
    </location>
    <ligand>
        <name>Zn(2+)</name>
        <dbReference type="ChEBI" id="CHEBI:29105"/>
        <label>2</label>
    </ligand>
</feature>
<feature type="binding site" evidence="1">
    <location>
        <position position="49"/>
    </location>
    <ligand>
        <name>Zn(2+)</name>
        <dbReference type="ChEBI" id="CHEBI:29105"/>
        <label>2</label>
    </ligand>
</feature>
<feature type="binding site" evidence="1">
    <location>
        <position position="59"/>
    </location>
    <ligand>
        <name>Zn(2+)</name>
        <dbReference type="ChEBI" id="CHEBI:29105"/>
        <label>2</label>
    </ligand>
</feature>
<feature type="binding site" evidence="1">
    <location>
        <position position="63"/>
    </location>
    <ligand>
        <name>Zn(2+)</name>
        <dbReference type="ChEBI" id="CHEBI:29105"/>
        <label>2</label>
    </ligand>
</feature>
<sequence length="278" mass="31384">MEFDELMQCPYDKNHMIRPSRFPYHLVKCRENNRAAAKILATCPYNARHRVPKQELDLHMASCEYRVTMEPISAAFSHQKVETSTWQSPPCEEVWETDEDPVSRPKPFILNDFTPSQPFNMSEGDGNMPYTGISSNYRPEVQPMNSVMQVKQNQPEPEPFTSSERNYDPRSKEPPNPKQPAVNGYKPATTNTNPWCRQTGGSRGAAPPKLGAKSSDEGPRNKEFPTPKANLMNEYVPVAANANPWCRQPGGSSAASEPLGVDSFDEWPCLGRQPWVRK</sequence>
<name>D7_XENLA</name>
<organism>
    <name type="scientific">Xenopus laevis</name>
    <name type="common">African clawed frog</name>
    <dbReference type="NCBI Taxonomy" id="8355"/>
    <lineage>
        <taxon>Eukaryota</taxon>
        <taxon>Metazoa</taxon>
        <taxon>Chordata</taxon>
        <taxon>Craniata</taxon>
        <taxon>Vertebrata</taxon>
        <taxon>Euteleostomi</taxon>
        <taxon>Amphibia</taxon>
        <taxon>Batrachia</taxon>
        <taxon>Anura</taxon>
        <taxon>Pipoidea</taxon>
        <taxon>Pipidae</taxon>
        <taxon>Xenopodinae</taxon>
        <taxon>Xenopus</taxon>
        <taxon>Xenopus</taxon>
    </lineage>
</organism>
<proteinExistence type="evidence at transcript level"/>
<keyword id="KW-0963">Cytoplasm</keyword>
<keyword id="KW-0217">Developmental protein</keyword>
<keyword id="KW-0479">Metal-binding</keyword>
<keyword id="KW-1185">Reference proteome</keyword>
<keyword id="KW-0677">Repeat</keyword>
<keyword id="KW-0862">Zinc</keyword>
<keyword id="KW-0863">Zinc-finger</keyword>
<comment type="function">
    <text>Involved in oocyte maturation. It is possible that D7 is required at a certain point in the maturation process and that maturation cannot proceed beyond this point unless a threshold amount of D7 protein is provided.</text>
</comment>
<comment type="subcellular location">
    <subcellularLocation>
        <location>Cytoplasm</location>
    </subcellularLocation>
</comment>
<comment type="developmental stage">
    <text>Its levels are highest during the first day of embryonic development and then decrease; D7 protein was not detected in adult tissues.</text>
</comment>
<comment type="similarity">
    <text evidence="3">Belongs to the UPF0224 (FAM112) family.</text>
</comment>